<evidence type="ECO:0000250" key="1">
    <source>
        <dbReference type="UniProtKB" id="Q89869"/>
    </source>
</evidence>
<evidence type="ECO:0000305" key="2"/>
<accession>P0C9V1</accession>
<feature type="chain" id="PRO_0000373352" description="Protein MGF 505-10R">
    <location>
        <begin position="1"/>
        <end position="543"/>
    </location>
</feature>
<keyword id="KW-0244">Early protein</keyword>
<organism>
    <name type="scientific">African swine fever virus (isolate Tick/South Africa/Pretoriuskop Pr4/1996)</name>
    <name type="common">ASFV</name>
    <dbReference type="NCBI Taxonomy" id="561443"/>
    <lineage>
        <taxon>Viruses</taxon>
        <taxon>Varidnaviria</taxon>
        <taxon>Bamfordvirae</taxon>
        <taxon>Nucleocytoviricota</taxon>
        <taxon>Pokkesviricetes</taxon>
        <taxon>Asfuvirales</taxon>
        <taxon>Asfarviridae</taxon>
        <taxon>Asfivirus</taxon>
        <taxon>African swine fever virus</taxon>
    </lineage>
</organism>
<reference key="1">
    <citation type="submission" date="2003-03" db="EMBL/GenBank/DDBJ databases">
        <title>African swine fever virus genomes.</title>
        <authorList>
            <person name="Kutish G.F."/>
            <person name="Rock D.L."/>
        </authorList>
    </citation>
    <scope>NUCLEOTIDE SEQUENCE [LARGE SCALE GENOMIC DNA]</scope>
</reference>
<dbReference type="EMBL" id="AY261363">
    <property type="status" value="NOT_ANNOTATED_CDS"/>
    <property type="molecule type" value="Genomic_DNA"/>
</dbReference>
<dbReference type="SMR" id="P0C9V1"/>
<dbReference type="Proteomes" id="UP000000859">
    <property type="component" value="Segment"/>
</dbReference>
<dbReference type="InterPro" id="IPR004858">
    <property type="entry name" value="MGF_505"/>
</dbReference>
<dbReference type="Pfam" id="PF03158">
    <property type="entry name" value="DUF249"/>
    <property type="match status" value="1"/>
</dbReference>
<proteinExistence type="inferred from homology"/>
<protein>
    <recommendedName>
        <fullName>Protein MGF 505-10R</fullName>
    </recommendedName>
</protein>
<gene>
    <name type="ordered locus">Pret-045</name>
</gene>
<comment type="function">
    <text evidence="1">Plays a role in virus cell tropism, and may be required for efficient virus replication in macrophages.</text>
</comment>
<comment type="induction">
    <text evidence="2">Expressed in the early phase of the viral replicative cycle.</text>
</comment>
<comment type="similarity">
    <text evidence="2">Belongs to the asfivirus MGF 505 family.</text>
</comment>
<name>50510_ASFP4</name>
<sequence>MFSLQELCRKNIYILPYPLGKHVLQQLGLYWKGHGSLQRIGDDHVLLQQDLIFSINEALRMAGEEGNNEVVKLLLLWEGNLHYAIIGALEGDRYDLIHKYYDQIGDCHKILPLIQDPQIFEKCHELSNSCNIRCLLEHAVKHDMLSILQKHKEQIRLHLALTQILFELACHERKNDIIRWIGYSLHIHHLETIFDVAFAHKNLSLYVLGYELLMHKVNTEAAYIELPNLLSYHLRTAAAGGLLNFMLETIKHGGYVDKTVLSAAIRYKHRKIVAHFIHQVPRKTVKKLLLYAVQARAPKKTLNLLLSSLNYSVHTITKQLVHNVVIYSSTLIVKLLLMRRKNKLNLVDAVLARLVKYSTYTDIVQFMSEFSVSPERVIKMAARESRTFLIEMISKAAWGNHPQTLIHHLKQLAHTMKSQSGKDLIIYTIHYIYLNSNMLVAEEEKNIFKLAKFYANHNAVNRFKQVCEDYYALDVDARFKTLILECFEIAVQKNYPRIANIVDDYVRFLFYRGDITEEEIHEAYSLKDAEFYVDLKWLQHDLF</sequence>
<organismHost>
    <name type="scientific">Ornithodoros</name>
    <name type="common">relapsing fever ticks</name>
    <dbReference type="NCBI Taxonomy" id="6937"/>
</organismHost>
<organismHost>
    <name type="scientific">Phacochoerus aethiopicus</name>
    <name type="common">Warthog</name>
    <dbReference type="NCBI Taxonomy" id="85517"/>
</organismHost>
<organismHost>
    <name type="scientific">Phacochoerus africanus</name>
    <name type="common">Warthog</name>
    <dbReference type="NCBI Taxonomy" id="41426"/>
</organismHost>
<organismHost>
    <name type="scientific">Potamochoerus larvatus</name>
    <name type="common">Bushpig</name>
    <dbReference type="NCBI Taxonomy" id="273792"/>
</organismHost>
<organismHost>
    <name type="scientific">Sus scrofa</name>
    <name type="common">Pig</name>
    <dbReference type="NCBI Taxonomy" id="9823"/>
</organismHost>